<keyword id="KW-0028">Amino-acid biosynthesis</keyword>
<keyword id="KW-0963">Cytoplasm</keyword>
<keyword id="KW-0368">Histidine biosynthesis</keyword>
<keyword id="KW-0456">Lyase</keyword>
<keyword id="KW-1185">Reference proteome</keyword>
<gene>
    <name evidence="1" type="primary">hisF</name>
    <name type="ordered locus">NP_4158A</name>
</gene>
<evidence type="ECO:0000255" key="1">
    <source>
        <dbReference type="HAMAP-Rule" id="MF_01013"/>
    </source>
</evidence>
<organism>
    <name type="scientific">Natronomonas pharaonis (strain ATCC 35678 / DSM 2160 / CIP 103997 / JCM 8858 / NBRC 14720 / NCIMB 2260 / Gabara)</name>
    <name type="common">Halobacterium pharaonis</name>
    <dbReference type="NCBI Taxonomy" id="348780"/>
    <lineage>
        <taxon>Archaea</taxon>
        <taxon>Methanobacteriati</taxon>
        <taxon>Methanobacteriota</taxon>
        <taxon>Stenosarchaea group</taxon>
        <taxon>Halobacteria</taxon>
        <taxon>Halobacteriales</taxon>
        <taxon>Haloarculaceae</taxon>
        <taxon>Natronomonas</taxon>
    </lineage>
</organism>
<comment type="function">
    <text evidence="1">IGPS catalyzes the conversion of PRFAR and glutamine to IGP, AICAR and glutamate. The HisF subunit catalyzes the cyclization activity that produces IGP and AICAR from PRFAR using the ammonia provided by the HisH subunit.</text>
</comment>
<comment type="catalytic activity">
    <reaction evidence="1">
        <text>5-[(5-phospho-1-deoxy-D-ribulos-1-ylimino)methylamino]-1-(5-phospho-beta-D-ribosyl)imidazole-4-carboxamide + L-glutamine = D-erythro-1-(imidazol-4-yl)glycerol 3-phosphate + 5-amino-1-(5-phospho-beta-D-ribosyl)imidazole-4-carboxamide + L-glutamate + H(+)</text>
        <dbReference type="Rhea" id="RHEA:24793"/>
        <dbReference type="ChEBI" id="CHEBI:15378"/>
        <dbReference type="ChEBI" id="CHEBI:29985"/>
        <dbReference type="ChEBI" id="CHEBI:58278"/>
        <dbReference type="ChEBI" id="CHEBI:58359"/>
        <dbReference type="ChEBI" id="CHEBI:58475"/>
        <dbReference type="ChEBI" id="CHEBI:58525"/>
        <dbReference type="EC" id="4.3.2.10"/>
    </reaction>
</comment>
<comment type="pathway">
    <text evidence="1">Amino-acid biosynthesis; L-histidine biosynthesis; L-histidine from 5-phospho-alpha-D-ribose 1-diphosphate: step 5/9.</text>
</comment>
<comment type="subunit">
    <text evidence="1">Heterodimer of HisH and HisF.</text>
</comment>
<comment type="subcellular location">
    <subcellularLocation>
        <location evidence="1">Cytoplasm</location>
    </subcellularLocation>
</comment>
<comment type="similarity">
    <text evidence="1">Belongs to the HisA/HisF family.</text>
</comment>
<proteinExistence type="inferred from homology"/>
<feature type="chain" id="PRO_0000142285" description="Imidazole glycerol phosphate synthase subunit HisF">
    <location>
        <begin position="1"/>
        <end position="271"/>
    </location>
</feature>
<feature type="active site" evidence="1">
    <location>
        <position position="12"/>
    </location>
</feature>
<feature type="active site" evidence="1">
    <location>
        <position position="136"/>
    </location>
</feature>
<protein>
    <recommendedName>
        <fullName evidence="1">Imidazole glycerol phosphate synthase subunit HisF</fullName>
        <ecNumber evidence="1">4.3.2.10</ecNumber>
    </recommendedName>
    <alternativeName>
        <fullName evidence="1">IGP synthase cyclase subunit</fullName>
    </alternativeName>
    <alternativeName>
        <fullName evidence="1">IGP synthase subunit HisF</fullName>
    </alternativeName>
    <alternativeName>
        <fullName evidence="1">ImGP synthase subunit HisF</fullName>
        <shortName evidence="1">IGPS subunit HisF</shortName>
    </alternativeName>
</protein>
<dbReference type="EC" id="4.3.2.10" evidence="1"/>
<dbReference type="EMBL" id="CR936257">
    <property type="protein sequence ID" value="CAI50170.1"/>
    <property type="molecule type" value="Genomic_DNA"/>
</dbReference>
<dbReference type="RefSeq" id="WP_011323786.1">
    <property type="nucleotide sequence ID" value="NC_007426.1"/>
</dbReference>
<dbReference type="SMR" id="Q3INY2"/>
<dbReference type="STRING" id="348780.NP_4158A"/>
<dbReference type="EnsemblBacteria" id="CAI50170">
    <property type="protein sequence ID" value="CAI50170"/>
    <property type="gene ID" value="NP_4158A"/>
</dbReference>
<dbReference type="GeneID" id="3702819"/>
<dbReference type="KEGG" id="nph:NP_4158A"/>
<dbReference type="eggNOG" id="arCOG00617">
    <property type="taxonomic scope" value="Archaea"/>
</dbReference>
<dbReference type="HOGENOM" id="CLU_048577_4_0_2"/>
<dbReference type="OrthoDB" id="6261at2157"/>
<dbReference type="UniPathway" id="UPA00031">
    <property type="reaction ID" value="UER00010"/>
</dbReference>
<dbReference type="Proteomes" id="UP000002698">
    <property type="component" value="Chromosome"/>
</dbReference>
<dbReference type="GO" id="GO:0005737">
    <property type="term" value="C:cytoplasm"/>
    <property type="evidence" value="ECO:0007669"/>
    <property type="project" value="UniProtKB-SubCell"/>
</dbReference>
<dbReference type="GO" id="GO:0000107">
    <property type="term" value="F:imidazoleglycerol-phosphate synthase activity"/>
    <property type="evidence" value="ECO:0007669"/>
    <property type="project" value="UniProtKB-UniRule"/>
</dbReference>
<dbReference type="GO" id="GO:0016829">
    <property type="term" value="F:lyase activity"/>
    <property type="evidence" value="ECO:0007669"/>
    <property type="project" value="UniProtKB-KW"/>
</dbReference>
<dbReference type="GO" id="GO:0000105">
    <property type="term" value="P:L-histidine biosynthetic process"/>
    <property type="evidence" value="ECO:0007669"/>
    <property type="project" value="UniProtKB-UniRule"/>
</dbReference>
<dbReference type="CDD" id="cd04731">
    <property type="entry name" value="HisF"/>
    <property type="match status" value="1"/>
</dbReference>
<dbReference type="Gene3D" id="3.20.20.70">
    <property type="entry name" value="Aldolase class I"/>
    <property type="match status" value="1"/>
</dbReference>
<dbReference type="HAMAP" id="MF_01013">
    <property type="entry name" value="HisF"/>
    <property type="match status" value="1"/>
</dbReference>
<dbReference type="InterPro" id="IPR013785">
    <property type="entry name" value="Aldolase_TIM"/>
</dbReference>
<dbReference type="InterPro" id="IPR006062">
    <property type="entry name" value="His_biosynth"/>
</dbReference>
<dbReference type="InterPro" id="IPR004651">
    <property type="entry name" value="HisF"/>
</dbReference>
<dbReference type="InterPro" id="IPR050064">
    <property type="entry name" value="IGPS_HisA/HisF"/>
</dbReference>
<dbReference type="InterPro" id="IPR011060">
    <property type="entry name" value="RibuloseP-bd_barrel"/>
</dbReference>
<dbReference type="NCBIfam" id="TIGR00735">
    <property type="entry name" value="hisF"/>
    <property type="match status" value="1"/>
</dbReference>
<dbReference type="PANTHER" id="PTHR21235:SF2">
    <property type="entry name" value="IMIDAZOLE GLYCEROL PHOSPHATE SYNTHASE HISHF"/>
    <property type="match status" value="1"/>
</dbReference>
<dbReference type="PANTHER" id="PTHR21235">
    <property type="entry name" value="IMIDAZOLE GLYCEROL PHOSPHATE SYNTHASE SUBUNIT HISF/H IGP SYNTHASE SUBUNIT HISF/H"/>
    <property type="match status" value="1"/>
</dbReference>
<dbReference type="Pfam" id="PF00977">
    <property type="entry name" value="His_biosynth"/>
    <property type="match status" value="1"/>
</dbReference>
<dbReference type="SUPFAM" id="SSF51366">
    <property type="entry name" value="Ribulose-phoshate binding barrel"/>
    <property type="match status" value="1"/>
</dbReference>
<name>HIS6_NATPD</name>
<accession>Q3INY2</accession>
<reference key="1">
    <citation type="journal article" date="2005" name="Genome Res.">
        <title>Living with two extremes: conclusions from the genome sequence of Natronomonas pharaonis.</title>
        <authorList>
            <person name="Falb M."/>
            <person name="Pfeiffer F."/>
            <person name="Palm P."/>
            <person name="Rodewald K."/>
            <person name="Hickmann V."/>
            <person name="Tittor J."/>
            <person name="Oesterhelt D."/>
        </authorList>
    </citation>
    <scope>NUCLEOTIDE SEQUENCE [LARGE SCALE GENOMIC DNA]</scope>
    <source>
        <strain>ATCC 35678 / DSM 2160 / CIP 103997 / JCM 8858 / NBRC 14720 / NCIMB 2260 / Gabara</strain>
    </source>
</reference>
<sequence length="271" mass="29048">MALTKRIIPCIDVDLNEDGEAAVYTGVNFEDLEYTGDPVELAKKYNEAGADEFVFLDITASAEGRETMLDTVSAVADECFIPLTVGGGIRTRDDIKETLRAGADKVSINTGALQRPELIGEGAEAFGSQCIVISVDARRRFDEAGEHYVEVDGESCWFECTIKGGREGTGTDVVEWAGEAADRGAGELFVNSIDADGTKDGYDIPLTKAVCDNVPTPVIASSGCGSPEHMAEVFEDADADAALAASIFHFEEYSIEETKRSLDEQGIPVRL</sequence>